<name>CF206_RAT</name>
<dbReference type="EMBL" id="AABR03041439">
    <property type="status" value="NOT_ANNOTATED_CDS"/>
    <property type="molecule type" value="Genomic_DNA"/>
</dbReference>
<dbReference type="EMBL" id="AABR03043392">
    <property type="status" value="NOT_ANNOTATED_CDS"/>
    <property type="molecule type" value="Genomic_DNA"/>
</dbReference>
<dbReference type="EMBL" id="BC128759">
    <property type="protein sequence ID" value="AAI28760.1"/>
    <property type="molecule type" value="mRNA"/>
</dbReference>
<dbReference type="RefSeq" id="NP_001073169.1">
    <property type="nucleotide sequence ID" value="NM_001079701.1"/>
</dbReference>
<dbReference type="RefSeq" id="XP_017449021.1">
    <property type="nucleotide sequence ID" value="XM_017593532.3"/>
</dbReference>
<dbReference type="SMR" id="A1A5Q4"/>
<dbReference type="FunCoup" id="A1A5Q4">
    <property type="interactions" value="89"/>
</dbReference>
<dbReference type="STRING" id="10116.ENSRNOP00000045325"/>
<dbReference type="PhosphoSitePlus" id="A1A5Q4"/>
<dbReference type="PaxDb" id="10116-ENSRNOP00000045325"/>
<dbReference type="Ensembl" id="ENSRNOT00000051243.5">
    <property type="protein sequence ID" value="ENSRNOP00000045325.3"/>
    <property type="gene ID" value="ENSRNOG00000009061.8"/>
</dbReference>
<dbReference type="GeneID" id="366347"/>
<dbReference type="KEGG" id="rno:366347"/>
<dbReference type="UCSC" id="RGD:1310641">
    <property type="organism name" value="rat"/>
</dbReference>
<dbReference type="AGR" id="RGD:1310641"/>
<dbReference type="CTD" id="154313"/>
<dbReference type="RGD" id="1310641">
    <property type="gene designation" value="Cfap206"/>
</dbReference>
<dbReference type="eggNOG" id="ENOG502QTGJ">
    <property type="taxonomic scope" value="Eukaryota"/>
</dbReference>
<dbReference type="GeneTree" id="ENSGT00390000016036"/>
<dbReference type="HOGENOM" id="CLU_030061_0_0_1"/>
<dbReference type="InParanoid" id="A1A5Q4"/>
<dbReference type="OMA" id="QLMELMC"/>
<dbReference type="OrthoDB" id="70025at9989"/>
<dbReference type="PhylomeDB" id="A1A5Q4"/>
<dbReference type="TreeFam" id="TF323439"/>
<dbReference type="PRO" id="PR:A1A5Q4"/>
<dbReference type="Proteomes" id="UP000002494">
    <property type="component" value="Chromosome 5"/>
</dbReference>
<dbReference type="Bgee" id="ENSRNOG00000009061">
    <property type="expression patterns" value="Expressed in testis and 3 other cell types or tissues"/>
</dbReference>
<dbReference type="GO" id="GO:0005930">
    <property type="term" value="C:axoneme"/>
    <property type="evidence" value="ECO:0000250"/>
    <property type="project" value="UniProtKB"/>
</dbReference>
<dbReference type="GO" id="GO:0036064">
    <property type="term" value="C:ciliary basal body"/>
    <property type="evidence" value="ECO:0000250"/>
    <property type="project" value="UniProtKB"/>
</dbReference>
<dbReference type="GO" id="GO:0031514">
    <property type="term" value="C:motile cilium"/>
    <property type="evidence" value="ECO:0000250"/>
    <property type="project" value="UniProtKB"/>
</dbReference>
<dbReference type="GO" id="GO:0001534">
    <property type="term" value="C:radial spoke"/>
    <property type="evidence" value="ECO:0000250"/>
    <property type="project" value="UniProtKB"/>
</dbReference>
<dbReference type="GO" id="GO:0035082">
    <property type="term" value="P:axoneme assembly"/>
    <property type="evidence" value="ECO:0000250"/>
    <property type="project" value="UniProtKB"/>
</dbReference>
<dbReference type="GO" id="GO:0003341">
    <property type="term" value="P:cilium movement"/>
    <property type="evidence" value="ECO:0000250"/>
    <property type="project" value="UniProtKB"/>
</dbReference>
<dbReference type="GO" id="GO:0003356">
    <property type="term" value="P:regulation of cilium beat frequency"/>
    <property type="evidence" value="ECO:0000250"/>
    <property type="project" value="UniProtKB"/>
</dbReference>
<dbReference type="GO" id="GO:1901317">
    <property type="term" value="P:regulation of flagellated sperm motility"/>
    <property type="evidence" value="ECO:0000250"/>
    <property type="project" value="UniProtKB"/>
</dbReference>
<dbReference type="GO" id="GO:0007288">
    <property type="term" value="P:sperm axoneme assembly"/>
    <property type="evidence" value="ECO:0000250"/>
    <property type="project" value="UniProtKB"/>
</dbReference>
<dbReference type="InterPro" id="IPR021897">
    <property type="entry name" value="FAP206"/>
</dbReference>
<dbReference type="PANTHER" id="PTHR21442">
    <property type="entry name" value="CILIA- AND FLAGELLA-ASSOCIATED PROTEIN 206"/>
    <property type="match status" value="1"/>
</dbReference>
<dbReference type="PANTHER" id="PTHR21442:SF0">
    <property type="entry name" value="CILIA- AND FLAGELLA-ASSOCIATED PROTEIN 206"/>
    <property type="match status" value="1"/>
</dbReference>
<dbReference type="Pfam" id="PF12018">
    <property type="entry name" value="FAP206"/>
    <property type="match status" value="1"/>
</dbReference>
<organism>
    <name type="scientific">Rattus norvegicus</name>
    <name type="common">Rat</name>
    <dbReference type="NCBI Taxonomy" id="10116"/>
    <lineage>
        <taxon>Eukaryota</taxon>
        <taxon>Metazoa</taxon>
        <taxon>Chordata</taxon>
        <taxon>Craniata</taxon>
        <taxon>Vertebrata</taxon>
        <taxon>Euteleostomi</taxon>
        <taxon>Mammalia</taxon>
        <taxon>Eutheria</taxon>
        <taxon>Euarchontoglires</taxon>
        <taxon>Glires</taxon>
        <taxon>Rodentia</taxon>
        <taxon>Myomorpha</taxon>
        <taxon>Muroidea</taxon>
        <taxon>Muridae</taxon>
        <taxon>Murinae</taxon>
        <taxon>Rattus</taxon>
    </lineage>
</organism>
<protein>
    <recommendedName>
        <fullName evidence="2">Cilia- and flagella-associated protein 206</fullName>
    </recommendedName>
</protein>
<reference key="1">
    <citation type="journal article" date="2004" name="Nature">
        <title>Genome sequence of the Brown Norway rat yields insights into mammalian evolution.</title>
        <authorList>
            <person name="Gibbs R.A."/>
            <person name="Weinstock G.M."/>
            <person name="Metzker M.L."/>
            <person name="Muzny D.M."/>
            <person name="Sodergren E.J."/>
            <person name="Scherer S."/>
            <person name="Scott G."/>
            <person name="Steffen D."/>
            <person name="Worley K.C."/>
            <person name="Burch P.E."/>
            <person name="Okwuonu G."/>
            <person name="Hines S."/>
            <person name="Lewis L."/>
            <person name="Deramo C."/>
            <person name="Delgado O."/>
            <person name="Dugan-Rocha S."/>
            <person name="Miner G."/>
            <person name="Morgan M."/>
            <person name="Hawes A."/>
            <person name="Gill R."/>
            <person name="Holt R.A."/>
            <person name="Adams M.D."/>
            <person name="Amanatides P.G."/>
            <person name="Baden-Tillson H."/>
            <person name="Barnstead M."/>
            <person name="Chin S."/>
            <person name="Evans C.A."/>
            <person name="Ferriera S."/>
            <person name="Fosler C."/>
            <person name="Glodek A."/>
            <person name="Gu Z."/>
            <person name="Jennings D."/>
            <person name="Kraft C.L."/>
            <person name="Nguyen T."/>
            <person name="Pfannkoch C.M."/>
            <person name="Sitter C."/>
            <person name="Sutton G.G."/>
            <person name="Venter J.C."/>
            <person name="Woodage T."/>
            <person name="Smith D."/>
            <person name="Lee H.-M."/>
            <person name="Gustafson E."/>
            <person name="Cahill P."/>
            <person name="Kana A."/>
            <person name="Doucette-Stamm L."/>
            <person name="Weinstock K."/>
            <person name="Fechtel K."/>
            <person name="Weiss R.B."/>
            <person name="Dunn D.M."/>
            <person name="Green E.D."/>
            <person name="Blakesley R.W."/>
            <person name="Bouffard G.G."/>
            <person name="De Jong P.J."/>
            <person name="Osoegawa K."/>
            <person name="Zhu B."/>
            <person name="Marra M."/>
            <person name="Schein J."/>
            <person name="Bosdet I."/>
            <person name="Fjell C."/>
            <person name="Jones S."/>
            <person name="Krzywinski M."/>
            <person name="Mathewson C."/>
            <person name="Siddiqui A."/>
            <person name="Wye N."/>
            <person name="McPherson J."/>
            <person name="Zhao S."/>
            <person name="Fraser C.M."/>
            <person name="Shetty J."/>
            <person name="Shatsman S."/>
            <person name="Geer K."/>
            <person name="Chen Y."/>
            <person name="Abramzon S."/>
            <person name="Nierman W.C."/>
            <person name="Havlak P.H."/>
            <person name="Chen R."/>
            <person name="Durbin K.J."/>
            <person name="Egan A."/>
            <person name="Ren Y."/>
            <person name="Song X.-Z."/>
            <person name="Li B."/>
            <person name="Liu Y."/>
            <person name="Qin X."/>
            <person name="Cawley S."/>
            <person name="Cooney A.J."/>
            <person name="D'Souza L.M."/>
            <person name="Martin K."/>
            <person name="Wu J.Q."/>
            <person name="Gonzalez-Garay M.L."/>
            <person name="Jackson A.R."/>
            <person name="Kalafus K.J."/>
            <person name="McLeod M.P."/>
            <person name="Milosavljevic A."/>
            <person name="Virk D."/>
            <person name="Volkov A."/>
            <person name="Wheeler D.A."/>
            <person name="Zhang Z."/>
            <person name="Bailey J.A."/>
            <person name="Eichler E.E."/>
            <person name="Tuzun E."/>
            <person name="Birney E."/>
            <person name="Mongin E."/>
            <person name="Ureta-Vidal A."/>
            <person name="Woodwark C."/>
            <person name="Zdobnov E."/>
            <person name="Bork P."/>
            <person name="Suyama M."/>
            <person name="Torrents D."/>
            <person name="Alexandersson M."/>
            <person name="Trask B.J."/>
            <person name="Young J.M."/>
            <person name="Huang H."/>
            <person name="Wang H."/>
            <person name="Xing H."/>
            <person name="Daniels S."/>
            <person name="Gietzen D."/>
            <person name="Schmidt J."/>
            <person name="Stevens K."/>
            <person name="Vitt U."/>
            <person name="Wingrove J."/>
            <person name="Camara F."/>
            <person name="Mar Alba M."/>
            <person name="Abril J.F."/>
            <person name="Guigo R."/>
            <person name="Smit A."/>
            <person name="Dubchak I."/>
            <person name="Rubin E.M."/>
            <person name="Couronne O."/>
            <person name="Poliakov A."/>
            <person name="Huebner N."/>
            <person name="Ganten D."/>
            <person name="Goesele C."/>
            <person name="Hummel O."/>
            <person name="Kreitler T."/>
            <person name="Lee Y.-A."/>
            <person name="Monti J."/>
            <person name="Schulz H."/>
            <person name="Zimdahl H."/>
            <person name="Himmelbauer H."/>
            <person name="Lehrach H."/>
            <person name="Jacob H.J."/>
            <person name="Bromberg S."/>
            <person name="Gullings-Handley J."/>
            <person name="Jensen-Seaman M.I."/>
            <person name="Kwitek A.E."/>
            <person name="Lazar J."/>
            <person name="Pasko D."/>
            <person name="Tonellato P.J."/>
            <person name="Twigger S."/>
            <person name="Ponting C.P."/>
            <person name="Duarte J.M."/>
            <person name="Rice S."/>
            <person name="Goodstadt L."/>
            <person name="Beatson S.A."/>
            <person name="Emes R.D."/>
            <person name="Winter E.E."/>
            <person name="Webber C."/>
            <person name="Brandt P."/>
            <person name="Nyakatura G."/>
            <person name="Adetobi M."/>
            <person name="Chiaromonte F."/>
            <person name="Elnitski L."/>
            <person name="Eswara P."/>
            <person name="Hardison R.C."/>
            <person name="Hou M."/>
            <person name="Kolbe D."/>
            <person name="Makova K."/>
            <person name="Miller W."/>
            <person name="Nekrutenko A."/>
            <person name="Riemer C."/>
            <person name="Schwartz S."/>
            <person name="Taylor J."/>
            <person name="Yang S."/>
            <person name="Zhang Y."/>
            <person name="Lindpaintner K."/>
            <person name="Andrews T.D."/>
            <person name="Caccamo M."/>
            <person name="Clamp M."/>
            <person name="Clarke L."/>
            <person name="Curwen V."/>
            <person name="Durbin R.M."/>
            <person name="Eyras E."/>
            <person name="Searle S.M."/>
            <person name="Cooper G.M."/>
            <person name="Batzoglou S."/>
            <person name="Brudno M."/>
            <person name="Sidow A."/>
            <person name="Stone E.A."/>
            <person name="Payseur B.A."/>
            <person name="Bourque G."/>
            <person name="Lopez-Otin C."/>
            <person name="Puente X.S."/>
            <person name="Chakrabarti K."/>
            <person name="Chatterji S."/>
            <person name="Dewey C."/>
            <person name="Pachter L."/>
            <person name="Bray N."/>
            <person name="Yap V.B."/>
            <person name="Caspi A."/>
            <person name="Tesler G."/>
            <person name="Pevzner P.A."/>
            <person name="Haussler D."/>
            <person name="Roskin K.M."/>
            <person name="Baertsch R."/>
            <person name="Clawson H."/>
            <person name="Furey T.S."/>
            <person name="Hinrichs A.S."/>
            <person name="Karolchik D."/>
            <person name="Kent W.J."/>
            <person name="Rosenbloom K.R."/>
            <person name="Trumbower H."/>
            <person name="Weirauch M."/>
            <person name="Cooper D.N."/>
            <person name="Stenson P.D."/>
            <person name="Ma B."/>
            <person name="Brent M."/>
            <person name="Arumugam M."/>
            <person name="Shteynberg D."/>
            <person name="Copley R.R."/>
            <person name="Taylor M.S."/>
            <person name="Riethman H."/>
            <person name="Mudunuri U."/>
            <person name="Peterson J."/>
            <person name="Guyer M."/>
            <person name="Felsenfeld A."/>
            <person name="Old S."/>
            <person name="Mockrin S."/>
            <person name="Collins F.S."/>
        </authorList>
    </citation>
    <scope>NUCLEOTIDE SEQUENCE [LARGE SCALE GENOMIC DNA]</scope>
    <source>
        <strain>Brown Norway</strain>
    </source>
</reference>
<reference key="2">
    <citation type="journal article" date="2004" name="Genome Res.">
        <title>The status, quality, and expansion of the NIH full-length cDNA project: the Mammalian Gene Collection (MGC).</title>
        <authorList>
            <consortium name="The MGC Project Team"/>
        </authorList>
    </citation>
    <scope>NUCLEOTIDE SEQUENCE [LARGE SCALE MRNA]</scope>
    <source>
        <tissue>Testis</tissue>
    </source>
</reference>
<evidence type="ECO:0000250" key="1">
    <source>
        <dbReference type="UniProtKB" id="Q6PE87"/>
    </source>
</evidence>
<evidence type="ECO:0000305" key="2"/>
<evidence type="ECO:0000312" key="3">
    <source>
        <dbReference type="RGD" id="1310641"/>
    </source>
</evidence>
<feature type="chain" id="PRO_0000358911" description="Cilia- and flagella-associated protein 206">
    <location>
        <begin position="1"/>
        <end position="622"/>
    </location>
</feature>
<gene>
    <name evidence="3" type="primary">Cfap206</name>
</gene>
<comment type="function">
    <text evidence="1">Essential for sperm motility and is involved in the regulation of the beating frequency of motile cilia on the epithelial cells of the respiratory tract (By similarity). Required for the establishment of radial spokes in sperm flagella (By similarity).</text>
</comment>
<comment type="subcellular location">
    <subcellularLocation>
        <location evidence="1">Cytoplasm</location>
        <location evidence="1">Cytoskeleton</location>
        <location evidence="1">Cilium axoneme</location>
    </subcellularLocation>
    <subcellularLocation>
        <location evidence="1">Cytoplasm</location>
        <location evidence="1">Cytoskeleton</location>
        <location evidence="1">Cilium basal body</location>
    </subcellularLocation>
</comment>
<comment type="similarity">
    <text evidence="2">Belongs to the CFAP206 family.</text>
</comment>
<sequence length="622" mass="70835">MPPTQAESVIKNIIREIGQECAAHGEITSETVVAFMVKAVVLDPSNGFNMDRTLVKTDVQKLVKLCVARLLDNKNPSLDTIKMQVYFDMNYTSREDFLEEHHRVLESRLGIVSREITDTRACAKEELENLYRKIVSYVLLRSGLGSPTDIKIVREATAALQSVFPQAELCTFLTLSKKDKERQLKELTMIVTGIRLFNRDCGKGGEGIDDLPAILLEAIPATTHHIDSQLQIAQEQAFRYTAIIEKVTNNPLMAKELQPYMLKEALYNVRQYEIFLQTVLSDIITCAEEVELMTKQLAAQLEQLKMTVKSKTAVPTSQVFPIFIALASLWTSFQDETVLISVLSNLTTNLELFLGTHDLLFPEKVMQGLLDGVIVKTDMTRIEEHLEEKVQLADFRVLEWLFPETTANFNKLLIQYRGFCGYTFAVTDGLLLPGNPTIGILKYKEKYYTFNSRDAAYSFAENPDHYINLIKEKAKKNAELIQLLELHQQFETLIPYSQMKDVDKHFIKPITKCENGTQTDTHILPPTIVRSYEWNEWELRRKAIQLANLRQKMTHSVQTDLSHMRRDNASQVYPLKEVGTQSKREGSTRVPRPQIFIAGLRGGQSKTTHGVKINLTRAVDET</sequence>
<proteinExistence type="evidence at transcript level"/>
<keyword id="KW-0966">Cell projection</keyword>
<keyword id="KW-0969">Cilium</keyword>
<keyword id="KW-0970">Cilium biogenesis/degradation</keyword>
<keyword id="KW-0963">Cytoplasm</keyword>
<keyword id="KW-0206">Cytoskeleton</keyword>
<keyword id="KW-1185">Reference proteome</keyword>
<accession>A1A5Q4</accession>